<protein>
    <recommendedName>
        <fullName evidence="1">UDP-4-amino-4-deoxy-L-arabinose--oxoglutarate aminotransferase</fullName>
        <ecNumber evidence="1">2.6.1.87</ecNumber>
    </recommendedName>
    <alternativeName>
        <fullName evidence="1">UDP-(beta-L-threo-pentapyranosyl-4''-ulose diphosphate) aminotransferase</fullName>
        <shortName evidence="1">UDP-Ara4O aminotransferase</shortName>
    </alternativeName>
    <alternativeName>
        <fullName evidence="1">UDP-4-amino-4-deoxy-L-arabinose aminotransferase</fullName>
    </alternativeName>
</protein>
<sequence>MSNEFLPLCRPAIDEQDISAVADVLRSGWITTGPKSAELEESILRHTGAQHAVSLSSATAGMHLVLLVLGIGPGDEVITPSMTWVSTVNMITLLGAKPVFVDVDADNLMTDVALIEPLITERTKLIIPVHYAGASLDLDAIYDLGERYKIPVIEDAAHALGCEYKGHPIGKTGTCLFSLHAIKNVTTAEGGIFTTQDAELAARIRRLKFHGLGVDAFDRETQGRAPQAEVIEPGYKYNMPDICAVLALGQMKRIGEITQKRTELALHYRDLLTAVGGITPLSIPSYEHRHCWHLMIIRVDPLICGLNRDQLIARLKECNIGAGIHFKACHTQKYYRENYTAKFGEITKSLTNTEHNSEQICSLPLFPDMNFSDVERVVAAISEIVGNK</sequence>
<accession>A8FRR4</accession>
<gene>
    <name evidence="1" type="primary">arnB</name>
    <name type="ordered locus">Ssed_0926</name>
</gene>
<organism>
    <name type="scientific">Shewanella sediminis (strain HAW-EB3)</name>
    <dbReference type="NCBI Taxonomy" id="425104"/>
    <lineage>
        <taxon>Bacteria</taxon>
        <taxon>Pseudomonadati</taxon>
        <taxon>Pseudomonadota</taxon>
        <taxon>Gammaproteobacteria</taxon>
        <taxon>Alteromonadales</taxon>
        <taxon>Shewanellaceae</taxon>
        <taxon>Shewanella</taxon>
    </lineage>
</organism>
<proteinExistence type="inferred from homology"/>
<keyword id="KW-0032">Aminotransferase</keyword>
<keyword id="KW-0046">Antibiotic resistance</keyword>
<keyword id="KW-0441">Lipid A biosynthesis</keyword>
<keyword id="KW-0444">Lipid biosynthesis</keyword>
<keyword id="KW-0443">Lipid metabolism</keyword>
<keyword id="KW-0448">Lipopolysaccharide biosynthesis</keyword>
<keyword id="KW-0663">Pyridoxal phosphate</keyword>
<keyword id="KW-1185">Reference proteome</keyword>
<keyword id="KW-0808">Transferase</keyword>
<reference key="1">
    <citation type="submission" date="2007-08" db="EMBL/GenBank/DDBJ databases">
        <title>Complete sequence of Shewanella sediminis HAW-EB3.</title>
        <authorList>
            <consortium name="US DOE Joint Genome Institute"/>
            <person name="Copeland A."/>
            <person name="Lucas S."/>
            <person name="Lapidus A."/>
            <person name="Barry K."/>
            <person name="Glavina del Rio T."/>
            <person name="Dalin E."/>
            <person name="Tice H."/>
            <person name="Pitluck S."/>
            <person name="Chertkov O."/>
            <person name="Brettin T."/>
            <person name="Bruce D."/>
            <person name="Detter J.C."/>
            <person name="Han C."/>
            <person name="Schmutz J."/>
            <person name="Larimer F."/>
            <person name="Land M."/>
            <person name="Hauser L."/>
            <person name="Kyrpides N."/>
            <person name="Kim E."/>
            <person name="Zhao J.-S."/>
            <person name="Richardson P."/>
        </authorList>
    </citation>
    <scope>NUCLEOTIDE SEQUENCE [LARGE SCALE GENOMIC DNA]</scope>
    <source>
        <strain>HAW-EB3</strain>
    </source>
</reference>
<feature type="chain" id="PRO_0000380544" description="UDP-4-amino-4-deoxy-L-arabinose--oxoglutarate aminotransferase">
    <location>
        <begin position="1"/>
        <end position="388"/>
    </location>
</feature>
<feature type="modified residue" description="N6-(pyridoxal phosphate)lysine" evidence="1">
    <location>
        <position position="183"/>
    </location>
</feature>
<evidence type="ECO:0000255" key="1">
    <source>
        <dbReference type="HAMAP-Rule" id="MF_01167"/>
    </source>
</evidence>
<dbReference type="EC" id="2.6.1.87" evidence="1"/>
<dbReference type="EMBL" id="CP000821">
    <property type="protein sequence ID" value="ABV35537.1"/>
    <property type="molecule type" value="Genomic_DNA"/>
</dbReference>
<dbReference type="RefSeq" id="WP_012141273.1">
    <property type="nucleotide sequence ID" value="NC_009831.1"/>
</dbReference>
<dbReference type="SMR" id="A8FRR4"/>
<dbReference type="STRING" id="425104.Ssed_0926"/>
<dbReference type="KEGG" id="sse:Ssed_0926"/>
<dbReference type="eggNOG" id="COG0399">
    <property type="taxonomic scope" value="Bacteria"/>
</dbReference>
<dbReference type="HOGENOM" id="CLU_033332_0_3_6"/>
<dbReference type="OrthoDB" id="9804264at2"/>
<dbReference type="UniPathway" id="UPA00030"/>
<dbReference type="UniPathway" id="UPA00032">
    <property type="reaction ID" value="UER00493"/>
</dbReference>
<dbReference type="Proteomes" id="UP000002015">
    <property type="component" value="Chromosome"/>
</dbReference>
<dbReference type="GO" id="GO:0016020">
    <property type="term" value="C:membrane"/>
    <property type="evidence" value="ECO:0007669"/>
    <property type="project" value="GOC"/>
</dbReference>
<dbReference type="GO" id="GO:0030170">
    <property type="term" value="F:pyridoxal phosphate binding"/>
    <property type="evidence" value="ECO:0007669"/>
    <property type="project" value="TreeGrafter"/>
</dbReference>
<dbReference type="GO" id="GO:0099620">
    <property type="term" value="F:UDP-4-amino-4-deoxy-L-arabinose aminotransferase"/>
    <property type="evidence" value="ECO:0007669"/>
    <property type="project" value="UniProtKB-EC"/>
</dbReference>
<dbReference type="GO" id="GO:0009245">
    <property type="term" value="P:lipid A biosynthetic process"/>
    <property type="evidence" value="ECO:0007669"/>
    <property type="project" value="UniProtKB-KW"/>
</dbReference>
<dbReference type="GO" id="GO:0009103">
    <property type="term" value="P:lipopolysaccharide biosynthetic process"/>
    <property type="evidence" value="ECO:0007669"/>
    <property type="project" value="UniProtKB-UniRule"/>
</dbReference>
<dbReference type="GO" id="GO:0046677">
    <property type="term" value="P:response to antibiotic"/>
    <property type="evidence" value="ECO:0007669"/>
    <property type="project" value="UniProtKB-KW"/>
</dbReference>
<dbReference type="CDD" id="cd00616">
    <property type="entry name" value="AHBA_syn"/>
    <property type="match status" value="1"/>
</dbReference>
<dbReference type="Gene3D" id="3.90.1150.10">
    <property type="entry name" value="Aspartate Aminotransferase, domain 1"/>
    <property type="match status" value="1"/>
</dbReference>
<dbReference type="Gene3D" id="3.40.640.10">
    <property type="entry name" value="Type I PLP-dependent aspartate aminotransferase-like (Major domain)"/>
    <property type="match status" value="1"/>
</dbReference>
<dbReference type="HAMAP" id="MF_01167">
    <property type="entry name" value="ArnB_transfer"/>
    <property type="match status" value="1"/>
</dbReference>
<dbReference type="InterPro" id="IPR022850">
    <property type="entry name" value="ArnB_NH2Trfase"/>
</dbReference>
<dbReference type="InterPro" id="IPR000653">
    <property type="entry name" value="DegT/StrS_aminotransferase"/>
</dbReference>
<dbReference type="InterPro" id="IPR015424">
    <property type="entry name" value="PyrdxlP-dep_Trfase"/>
</dbReference>
<dbReference type="InterPro" id="IPR015421">
    <property type="entry name" value="PyrdxlP-dep_Trfase_major"/>
</dbReference>
<dbReference type="InterPro" id="IPR015422">
    <property type="entry name" value="PyrdxlP-dep_Trfase_small"/>
</dbReference>
<dbReference type="NCBIfam" id="NF008658">
    <property type="entry name" value="PRK11658.1"/>
    <property type="match status" value="1"/>
</dbReference>
<dbReference type="PANTHER" id="PTHR30244">
    <property type="entry name" value="TRANSAMINASE"/>
    <property type="match status" value="1"/>
</dbReference>
<dbReference type="PANTHER" id="PTHR30244:SF41">
    <property type="entry name" value="UDP-4-AMINO-4-DEOXY-L-ARABINOSE--OXOGLUTARATE AMINOTRANSFERASE"/>
    <property type="match status" value="1"/>
</dbReference>
<dbReference type="Pfam" id="PF01041">
    <property type="entry name" value="DegT_DnrJ_EryC1"/>
    <property type="match status" value="1"/>
</dbReference>
<dbReference type="PIRSF" id="PIRSF000390">
    <property type="entry name" value="PLP_StrS"/>
    <property type="match status" value="1"/>
</dbReference>
<dbReference type="SUPFAM" id="SSF53383">
    <property type="entry name" value="PLP-dependent transferases"/>
    <property type="match status" value="1"/>
</dbReference>
<name>ARNB_SHESH</name>
<comment type="function">
    <text evidence="1">Catalyzes the conversion of UDP-4-keto-arabinose (UDP-Ara4O) to UDP-4-amino-4-deoxy-L-arabinose (UDP-L-Ara4N). The modified arabinose is attached to lipid A and is required for resistance to polymyxin and cationic antimicrobial peptides.</text>
</comment>
<comment type="catalytic activity">
    <reaction evidence="1">
        <text>UDP-4-amino-4-deoxy-beta-L-arabinose + 2-oxoglutarate = UDP-beta-L-threo-pentopyranos-4-ulose + L-glutamate</text>
        <dbReference type="Rhea" id="RHEA:24710"/>
        <dbReference type="ChEBI" id="CHEBI:16810"/>
        <dbReference type="ChEBI" id="CHEBI:29985"/>
        <dbReference type="ChEBI" id="CHEBI:58708"/>
        <dbReference type="ChEBI" id="CHEBI:58710"/>
        <dbReference type="EC" id="2.6.1.87"/>
    </reaction>
</comment>
<comment type="cofactor">
    <cofactor evidence="1">
        <name>pyridoxal 5'-phosphate</name>
        <dbReference type="ChEBI" id="CHEBI:597326"/>
    </cofactor>
</comment>
<comment type="pathway">
    <text evidence="1">Nucleotide-sugar biosynthesis; UDP-4-deoxy-4-formamido-beta-L-arabinose biosynthesis; UDP-4-deoxy-4-formamido-beta-L-arabinose from UDP-alpha-D-glucuronate: step 2/3.</text>
</comment>
<comment type="pathway">
    <text evidence="1">Bacterial outer membrane biogenesis; lipopolysaccharide biosynthesis.</text>
</comment>
<comment type="subunit">
    <text evidence="1">Homodimer.</text>
</comment>
<comment type="similarity">
    <text evidence="1">Belongs to the DegT/DnrJ/EryC1 family. ArnB subfamily.</text>
</comment>